<proteinExistence type="evidence at protein level"/>
<protein>
    <recommendedName>
        <fullName>mRNA-decapping enzyme 1B</fullName>
        <ecNumber evidence="2">3.6.1.62</ecNumber>
    </recommendedName>
</protein>
<accession>Q3U564</accession>
<accession>B2RUI2</accession>
<accession>Q3V333</accession>
<dbReference type="EC" id="3.6.1.62" evidence="2"/>
<dbReference type="EMBL" id="AK050548">
    <property type="protein sequence ID" value="BAE20676.1"/>
    <property type="molecule type" value="mRNA"/>
</dbReference>
<dbReference type="EMBL" id="AK153860">
    <property type="protein sequence ID" value="BAE32216.1"/>
    <property type="molecule type" value="mRNA"/>
</dbReference>
<dbReference type="EMBL" id="BC141163">
    <property type="protein sequence ID" value="AAI41164.1"/>
    <property type="molecule type" value="mRNA"/>
</dbReference>
<dbReference type="CCDS" id="CCDS39610.1">
    <molecule id="Q3U564-1"/>
</dbReference>
<dbReference type="SMR" id="Q3U564"/>
<dbReference type="FunCoup" id="Q3U564">
    <property type="interactions" value="2406"/>
</dbReference>
<dbReference type="STRING" id="10090.ENSMUSP00000108397"/>
<dbReference type="GlyGen" id="Q3U564">
    <property type="glycosylation" value="1 site, 1 N-linked glycan (1 site)"/>
</dbReference>
<dbReference type="iPTMnet" id="Q3U564"/>
<dbReference type="PhosphoSitePlus" id="Q3U564"/>
<dbReference type="jPOST" id="Q3U564"/>
<dbReference type="PaxDb" id="10090-ENSMUSP00000108397"/>
<dbReference type="ProteomicsDB" id="279506">
    <molecule id="Q3U564-1"/>
</dbReference>
<dbReference type="ProteomicsDB" id="279507">
    <molecule id="Q3U564-2"/>
</dbReference>
<dbReference type="Antibodypedia" id="22113">
    <property type="antibodies" value="178 antibodies from 26 providers"/>
</dbReference>
<dbReference type="Ensembl" id="ENSMUST00000073909.6">
    <molecule id="Q3U564-2"/>
    <property type="protein sequence ID" value="ENSMUSP00000073568.6"/>
    <property type="gene ID" value="ENSMUSG00000041477.15"/>
</dbReference>
<dbReference type="UCSC" id="uc009dly.2">
    <molecule id="Q3U564-2"/>
    <property type="organism name" value="mouse"/>
</dbReference>
<dbReference type="AGR" id="MGI:2442404"/>
<dbReference type="MGI" id="MGI:2442404">
    <property type="gene designation" value="Dcp1b"/>
</dbReference>
<dbReference type="VEuPathDB" id="HostDB:ENSMUSG00000041477"/>
<dbReference type="eggNOG" id="KOG2868">
    <property type="taxonomic scope" value="Eukaryota"/>
</dbReference>
<dbReference type="GeneTree" id="ENSGT00940000158409"/>
<dbReference type="HOGENOM" id="CLU_030030_2_0_1"/>
<dbReference type="InParanoid" id="Q3U564"/>
<dbReference type="PhylomeDB" id="Q3U564"/>
<dbReference type="Reactome" id="R-MMU-430039">
    <property type="pathway name" value="mRNA decay by 5' to 3' exoribonuclease"/>
</dbReference>
<dbReference type="ChiTaRS" id="Dcp1b">
    <property type="organism name" value="mouse"/>
</dbReference>
<dbReference type="PRO" id="PR:Q3U564"/>
<dbReference type="Proteomes" id="UP000000589">
    <property type="component" value="Chromosome 6"/>
</dbReference>
<dbReference type="RNAct" id="Q3U564">
    <property type="molecule type" value="protein"/>
</dbReference>
<dbReference type="Bgee" id="ENSMUSG00000041477">
    <property type="expression patterns" value="Expressed in seminiferous tubule of testis and 195 other cell types or tissues"/>
</dbReference>
<dbReference type="ExpressionAtlas" id="Q3U564">
    <property type="expression patterns" value="baseline and differential"/>
</dbReference>
<dbReference type="GO" id="GO:0005634">
    <property type="term" value="C:nucleus"/>
    <property type="evidence" value="ECO:0007669"/>
    <property type="project" value="UniProtKB-SubCell"/>
</dbReference>
<dbReference type="GO" id="GO:0000932">
    <property type="term" value="C:P-body"/>
    <property type="evidence" value="ECO:0000314"/>
    <property type="project" value="MGI"/>
</dbReference>
<dbReference type="GO" id="GO:0140933">
    <property type="term" value="F:5'-(N(7)-methylguanosine 5'-triphospho)-[mRNA] hydrolase activity"/>
    <property type="evidence" value="ECO:0007669"/>
    <property type="project" value="RHEA"/>
</dbReference>
<dbReference type="GO" id="GO:0008047">
    <property type="term" value="F:enzyme activator activity"/>
    <property type="evidence" value="ECO:0007669"/>
    <property type="project" value="InterPro"/>
</dbReference>
<dbReference type="GO" id="GO:0097398">
    <property type="term" value="P:cellular response to interleukin-17"/>
    <property type="evidence" value="ECO:0000314"/>
    <property type="project" value="MGI"/>
</dbReference>
<dbReference type="GO" id="GO:0000290">
    <property type="term" value="P:deadenylation-dependent decapping of nuclear-transcribed mRNA"/>
    <property type="evidence" value="ECO:0007669"/>
    <property type="project" value="InterPro"/>
</dbReference>
<dbReference type="GO" id="GO:0000184">
    <property type="term" value="P:nuclear-transcribed mRNA catabolic process, nonsense-mediated decay"/>
    <property type="evidence" value="ECO:0007669"/>
    <property type="project" value="UniProtKB-KW"/>
</dbReference>
<dbReference type="GO" id="GO:0034504">
    <property type="term" value="P:protein localization to nucleus"/>
    <property type="evidence" value="ECO:0000314"/>
    <property type="project" value="MGI"/>
</dbReference>
<dbReference type="GO" id="GO:0110012">
    <property type="term" value="P:protein localization to P-body"/>
    <property type="evidence" value="ECO:0000314"/>
    <property type="project" value="MGI"/>
</dbReference>
<dbReference type="CDD" id="cd09804">
    <property type="entry name" value="Dcp1"/>
    <property type="match status" value="1"/>
</dbReference>
<dbReference type="FunFam" id="2.30.29.30:FF:000097">
    <property type="entry name" value="Putative mRNA-decapping enzyme 1A"/>
    <property type="match status" value="1"/>
</dbReference>
<dbReference type="Gene3D" id="6.10.140.2030">
    <property type="match status" value="1"/>
</dbReference>
<dbReference type="Gene3D" id="2.30.29.30">
    <property type="entry name" value="Pleckstrin-homology domain (PH domain)/Phosphotyrosine-binding domain (PTB)"/>
    <property type="match status" value="1"/>
</dbReference>
<dbReference type="InterPro" id="IPR010334">
    <property type="entry name" value="Dcp1"/>
</dbReference>
<dbReference type="InterPro" id="IPR031953">
    <property type="entry name" value="mRNA_decap_C"/>
</dbReference>
<dbReference type="InterPro" id="IPR011993">
    <property type="entry name" value="PH-like_dom_sf"/>
</dbReference>
<dbReference type="PANTHER" id="PTHR16290:SF5">
    <property type="entry name" value="MRNA-DECAPPING ENZYME 1B"/>
    <property type="match status" value="1"/>
</dbReference>
<dbReference type="PANTHER" id="PTHR16290">
    <property type="entry name" value="TRANSCRIPTION FACTOR SMIF DECAPPING ENZYME DCP1"/>
    <property type="match status" value="1"/>
</dbReference>
<dbReference type="Pfam" id="PF06058">
    <property type="entry name" value="DCP1"/>
    <property type="match status" value="1"/>
</dbReference>
<dbReference type="Pfam" id="PF16741">
    <property type="entry name" value="mRNA_decap_C"/>
    <property type="match status" value="1"/>
</dbReference>
<dbReference type="SUPFAM" id="SSF50729">
    <property type="entry name" value="PH domain-like"/>
    <property type="match status" value="1"/>
</dbReference>
<reference key="1">
    <citation type="journal article" date="2005" name="Science">
        <title>The transcriptional landscape of the mammalian genome.</title>
        <authorList>
            <person name="Carninci P."/>
            <person name="Kasukawa T."/>
            <person name="Katayama S."/>
            <person name="Gough J."/>
            <person name="Frith M.C."/>
            <person name="Maeda N."/>
            <person name="Oyama R."/>
            <person name="Ravasi T."/>
            <person name="Lenhard B."/>
            <person name="Wells C."/>
            <person name="Kodzius R."/>
            <person name="Shimokawa K."/>
            <person name="Bajic V.B."/>
            <person name="Brenner S.E."/>
            <person name="Batalov S."/>
            <person name="Forrest A.R."/>
            <person name="Zavolan M."/>
            <person name="Davis M.J."/>
            <person name="Wilming L.G."/>
            <person name="Aidinis V."/>
            <person name="Allen J.E."/>
            <person name="Ambesi-Impiombato A."/>
            <person name="Apweiler R."/>
            <person name="Aturaliya R.N."/>
            <person name="Bailey T.L."/>
            <person name="Bansal M."/>
            <person name="Baxter L."/>
            <person name="Beisel K.W."/>
            <person name="Bersano T."/>
            <person name="Bono H."/>
            <person name="Chalk A.M."/>
            <person name="Chiu K.P."/>
            <person name="Choudhary V."/>
            <person name="Christoffels A."/>
            <person name="Clutterbuck D.R."/>
            <person name="Crowe M.L."/>
            <person name="Dalla E."/>
            <person name="Dalrymple B.P."/>
            <person name="de Bono B."/>
            <person name="Della Gatta G."/>
            <person name="di Bernardo D."/>
            <person name="Down T."/>
            <person name="Engstrom P."/>
            <person name="Fagiolini M."/>
            <person name="Faulkner G."/>
            <person name="Fletcher C.F."/>
            <person name="Fukushima T."/>
            <person name="Furuno M."/>
            <person name="Futaki S."/>
            <person name="Gariboldi M."/>
            <person name="Georgii-Hemming P."/>
            <person name="Gingeras T.R."/>
            <person name="Gojobori T."/>
            <person name="Green R.E."/>
            <person name="Gustincich S."/>
            <person name="Harbers M."/>
            <person name="Hayashi Y."/>
            <person name="Hensch T.K."/>
            <person name="Hirokawa N."/>
            <person name="Hill D."/>
            <person name="Huminiecki L."/>
            <person name="Iacono M."/>
            <person name="Ikeo K."/>
            <person name="Iwama A."/>
            <person name="Ishikawa T."/>
            <person name="Jakt M."/>
            <person name="Kanapin A."/>
            <person name="Katoh M."/>
            <person name="Kawasawa Y."/>
            <person name="Kelso J."/>
            <person name="Kitamura H."/>
            <person name="Kitano H."/>
            <person name="Kollias G."/>
            <person name="Krishnan S.P."/>
            <person name="Kruger A."/>
            <person name="Kummerfeld S.K."/>
            <person name="Kurochkin I.V."/>
            <person name="Lareau L.F."/>
            <person name="Lazarevic D."/>
            <person name="Lipovich L."/>
            <person name="Liu J."/>
            <person name="Liuni S."/>
            <person name="McWilliam S."/>
            <person name="Madan Babu M."/>
            <person name="Madera M."/>
            <person name="Marchionni L."/>
            <person name="Matsuda H."/>
            <person name="Matsuzawa S."/>
            <person name="Miki H."/>
            <person name="Mignone F."/>
            <person name="Miyake S."/>
            <person name="Morris K."/>
            <person name="Mottagui-Tabar S."/>
            <person name="Mulder N."/>
            <person name="Nakano N."/>
            <person name="Nakauchi H."/>
            <person name="Ng P."/>
            <person name="Nilsson R."/>
            <person name="Nishiguchi S."/>
            <person name="Nishikawa S."/>
            <person name="Nori F."/>
            <person name="Ohara O."/>
            <person name="Okazaki Y."/>
            <person name="Orlando V."/>
            <person name="Pang K.C."/>
            <person name="Pavan W.J."/>
            <person name="Pavesi G."/>
            <person name="Pesole G."/>
            <person name="Petrovsky N."/>
            <person name="Piazza S."/>
            <person name="Reed J."/>
            <person name="Reid J.F."/>
            <person name="Ring B.Z."/>
            <person name="Ringwald M."/>
            <person name="Rost B."/>
            <person name="Ruan Y."/>
            <person name="Salzberg S.L."/>
            <person name="Sandelin A."/>
            <person name="Schneider C."/>
            <person name="Schoenbach C."/>
            <person name="Sekiguchi K."/>
            <person name="Semple C.A."/>
            <person name="Seno S."/>
            <person name="Sessa L."/>
            <person name="Sheng Y."/>
            <person name="Shibata Y."/>
            <person name="Shimada H."/>
            <person name="Shimada K."/>
            <person name="Silva D."/>
            <person name="Sinclair B."/>
            <person name="Sperling S."/>
            <person name="Stupka E."/>
            <person name="Sugiura K."/>
            <person name="Sultana R."/>
            <person name="Takenaka Y."/>
            <person name="Taki K."/>
            <person name="Tammoja K."/>
            <person name="Tan S.L."/>
            <person name="Tang S."/>
            <person name="Taylor M.S."/>
            <person name="Tegner J."/>
            <person name="Teichmann S.A."/>
            <person name="Ueda H.R."/>
            <person name="van Nimwegen E."/>
            <person name="Verardo R."/>
            <person name="Wei C.L."/>
            <person name="Yagi K."/>
            <person name="Yamanishi H."/>
            <person name="Zabarovsky E."/>
            <person name="Zhu S."/>
            <person name="Zimmer A."/>
            <person name="Hide W."/>
            <person name="Bult C."/>
            <person name="Grimmond S.M."/>
            <person name="Teasdale R.D."/>
            <person name="Liu E.T."/>
            <person name="Brusic V."/>
            <person name="Quackenbush J."/>
            <person name="Wahlestedt C."/>
            <person name="Mattick J.S."/>
            <person name="Hume D.A."/>
            <person name="Kai C."/>
            <person name="Sasaki D."/>
            <person name="Tomaru Y."/>
            <person name="Fukuda S."/>
            <person name="Kanamori-Katayama M."/>
            <person name="Suzuki M."/>
            <person name="Aoki J."/>
            <person name="Arakawa T."/>
            <person name="Iida J."/>
            <person name="Imamura K."/>
            <person name="Itoh M."/>
            <person name="Kato T."/>
            <person name="Kawaji H."/>
            <person name="Kawagashira N."/>
            <person name="Kawashima T."/>
            <person name="Kojima M."/>
            <person name="Kondo S."/>
            <person name="Konno H."/>
            <person name="Nakano K."/>
            <person name="Ninomiya N."/>
            <person name="Nishio T."/>
            <person name="Okada M."/>
            <person name="Plessy C."/>
            <person name="Shibata K."/>
            <person name="Shiraki T."/>
            <person name="Suzuki S."/>
            <person name="Tagami M."/>
            <person name="Waki K."/>
            <person name="Watahiki A."/>
            <person name="Okamura-Oho Y."/>
            <person name="Suzuki H."/>
            <person name="Kawai J."/>
            <person name="Hayashizaki Y."/>
        </authorList>
    </citation>
    <scope>NUCLEOTIDE SEQUENCE [LARGE SCALE MRNA] (ISOFORMS 1 AND 2)</scope>
    <source>
        <strain>C57BL/6J</strain>
        <strain>NOD</strain>
        <tissue>Pancreas</tissue>
        <tissue>Thymus</tissue>
    </source>
</reference>
<reference key="2">
    <citation type="journal article" date="2004" name="Genome Res.">
        <title>The status, quality, and expansion of the NIH full-length cDNA project: the Mammalian Gene Collection (MGC).</title>
        <authorList>
            <consortium name="The MGC Project Team"/>
        </authorList>
    </citation>
    <scope>NUCLEOTIDE SEQUENCE [LARGE SCALE MRNA] (ISOFORM 1)</scope>
    <source>
        <tissue>Brain</tissue>
    </source>
</reference>
<reference key="3">
    <citation type="journal article" date="2010" name="Cell">
        <title>A tissue-specific atlas of mouse protein phosphorylation and expression.</title>
        <authorList>
            <person name="Huttlin E.L."/>
            <person name="Jedrychowski M.P."/>
            <person name="Elias J.E."/>
            <person name="Goswami T."/>
            <person name="Rad R."/>
            <person name="Beausoleil S.A."/>
            <person name="Villen J."/>
            <person name="Haas W."/>
            <person name="Sowa M.E."/>
            <person name="Gygi S.P."/>
        </authorList>
    </citation>
    <scope>PHOSPHORYLATION [LARGE SCALE ANALYSIS] AT SER-144</scope>
    <scope>IDENTIFICATION BY MASS SPECTROMETRY [LARGE SCALE ANALYSIS]</scope>
    <source>
        <tissue>Brown adipose tissue</tissue>
        <tissue>Kidney</tissue>
        <tissue>Liver</tissue>
        <tissue>Testis</tissue>
    </source>
</reference>
<organism>
    <name type="scientific">Mus musculus</name>
    <name type="common">Mouse</name>
    <dbReference type="NCBI Taxonomy" id="10090"/>
    <lineage>
        <taxon>Eukaryota</taxon>
        <taxon>Metazoa</taxon>
        <taxon>Chordata</taxon>
        <taxon>Craniata</taxon>
        <taxon>Vertebrata</taxon>
        <taxon>Euteleostomi</taxon>
        <taxon>Mammalia</taxon>
        <taxon>Eutheria</taxon>
        <taxon>Euarchontoglires</taxon>
        <taxon>Glires</taxon>
        <taxon>Rodentia</taxon>
        <taxon>Myomorpha</taxon>
        <taxon>Muroidea</taxon>
        <taxon>Muridae</taxon>
        <taxon>Murinae</taxon>
        <taxon>Mus</taxon>
        <taxon>Mus</taxon>
    </lineage>
</organism>
<name>DCP1B_MOUSE</name>
<feature type="initiator methionine" description="Removed" evidence="1">
    <location>
        <position position="1"/>
    </location>
</feature>
<feature type="chain" id="PRO_0000287718" description="mRNA-decapping enzyme 1B">
    <location>
        <begin position="2"/>
        <end position="578"/>
    </location>
</feature>
<feature type="region of interest" description="Disordered" evidence="3">
    <location>
        <begin position="187"/>
        <end position="222"/>
    </location>
</feature>
<feature type="region of interest" description="Disordered" evidence="3">
    <location>
        <begin position="246"/>
        <end position="265"/>
    </location>
</feature>
<feature type="compositionally biased region" description="Basic residues" evidence="3">
    <location>
        <begin position="248"/>
        <end position="257"/>
    </location>
</feature>
<feature type="modified residue" description="N-acetylalanine" evidence="1">
    <location>
        <position position="2"/>
    </location>
</feature>
<feature type="modified residue" description="Phosphoserine" evidence="6">
    <location>
        <position position="144"/>
    </location>
</feature>
<feature type="modified residue" description="Phosphoserine" evidence="1">
    <location>
        <position position="145"/>
    </location>
</feature>
<feature type="modified residue" description="Phosphoserine" evidence="1">
    <location>
        <position position="274"/>
    </location>
</feature>
<feature type="modified residue" description="Phosphoserine" evidence="1">
    <location>
        <position position="335"/>
    </location>
</feature>
<feature type="modified residue" description="Phosphothreonine" evidence="1">
    <location>
        <position position="380"/>
    </location>
</feature>
<feature type="splice variant" id="VSP_025609" description="In isoform 2." evidence="4">
    <location>
        <begin position="495"/>
        <end position="527"/>
    </location>
</feature>
<sequence length="578" mass="62720">MAAAAAGGLPGKGHDISLAALRRHDPYISRIVDVASQVALYTFGHRANEWEKTGVEGTLFVYTRSASPKHGFTIMNRLSMENRTEPITKDLDFQLQNPFLLYRNGTLSIYGIWFYDKEECQRIAKLMKNLTQSEQLKACHGAGSSPVTLSSGEGQEVDILQMLTKAKDEYTKCKTCSEPKQMTNSSAICDNPKLIKPVPVRPSSSQRLQGPAPSKTSDPEPQHLSLTALFGKQDKAPCQETVKPSRTFAHHHHHHHQQQQETRPVHHGVACSLSCEEPRKLSLPVEKQLCPAIQKLMLGSPGLHPLPQHPEQWSCKSGSPSPAGGILPGPVQLGSPWNGRVAHCTQSTCRGHKLLEQLQGAPGAVHKYNPCAPTGPAVATQVAPGQSVAQSQLVYFSGPLQPPAPGHQALRKEQGALPAQAVSLSGSQESSPTVLPTQELLRKLQVVHQEQQAAPRPALAARFPVSAQGSGTEKPLEAWVSKTASMEKQAPLLQSTCAPLRETDNGLMALGGQELPAASSNLLLPLQNWESSTVASRPLTRLQLQEALLNLIQNDDNFLSIIYEAYLFSVTQAAMRTT</sequence>
<comment type="function">
    <text evidence="2">May play a role in the degradation of mRNAs, both in normal mRNA turnover and in nonsense-mediated mRNA decay. May remove the 7-methyl guanine cap structure from mRNA molecules, yielding a 5'-phosphorylated mRNA fragment and 7m-GDP (By similarity).</text>
</comment>
<comment type="catalytic activity">
    <reaction evidence="2">
        <text>a 5'-end (N(7)-methyl 5'-triphosphoguanosine)-ribonucleoside in mRNA + H2O = N(7)-methyl-GDP + a 5'-end phospho-ribonucleoside in mRNA + 2 H(+)</text>
        <dbReference type="Rhea" id="RHEA:67484"/>
        <dbReference type="Rhea" id="RHEA-COMP:15692"/>
        <dbReference type="Rhea" id="RHEA-COMP:17167"/>
        <dbReference type="ChEBI" id="CHEBI:15377"/>
        <dbReference type="ChEBI" id="CHEBI:15378"/>
        <dbReference type="ChEBI" id="CHEBI:63714"/>
        <dbReference type="ChEBI" id="CHEBI:138282"/>
        <dbReference type="ChEBI" id="CHEBI:156461"/>
        <dbReference type="EC" id="3.6.1.62"/>
    </reaction>
    <physiologicalReaction direction="left-to-right" evidence="2">
        <dbReference type="Rhea" id="RHEA:67485"/>
    </physiologicalReaction>
</comment>
<comment type="subunit">
    <text evidence="1">Interacts with DCP1A.</text>
</comment>
<comment type="subcellular location">
    <subcellularLocation>
        <location evidence="1">Cytoplasm</location>
    </subcellularLocation>
    <subcellularLocation>
        <location evidence="2">Nucleus</location>
    </subcellularLocation>
</comment>
<comment type="alternative products">
    <event type="alternative splicing"/>
    <isoform>
        <id>Q3U564-1</id>
        <name>1</name>
        <sequence type="displayed"/>
    </isoform>
    <isoform>
        <id>Q3U564-2</id>
        <name>2</name>
        <sequence type="described" ref="VSP_025609"/>
    </isoform>
</comment>
<comment type="similarity">
    <text evidence="5">Belongs to the DCP1 family.</text>
</comment>
<keyword id="KW-0007">Acetylation</keyword>
<keyword id="KW-0025">Alternative splicing</keyword>
<keyword id="KW-0963">Cytoplasm</keyword>
<keyword id="KW-0378">Hydrolase</keyword>
<keyword id="KW-0866">Nonsense-mediated mRNA decay</keyword>
<keyword id="KW-0539">Nucleus</keyword>
<keyword id="KW-0597">Phosphoprotein</keyword>
<keyword id="KW-1185">Reference proteome</keyword>
<evidence type="ECO:0000250" key="1">
    <source>
        <dbReference type="UniProtKB" id="Q8IZD4"/>
    </source>
</evidence>
<evidence type="ECO:0000250" key="2">
    <source>
        <dbReference type="UniProtKB" id="Q9NPI6"/>
    </source>
</evidence>
<evidence type="ECO:0000256" key="3">
    <source>
        <dbReference type="SAM" id="MobiDB-lite"/>
    </source>
</evidence>
<evidence type="ECO:0000303" key="4">
    <source>
    </source>
</evidence>
<evidence type="ECO:0000305" key="5"/>
<evidence type="ECO:0007744" key="6">
    <source>
    </source>
</evidence>
<gene>
    <name type="primary">Dcp1b</name>
</gene>